<sequence>MRIKLIAVGGKMPGWVEQGYNEYVKRMPRDMPLQLIEIPMPRRQKNADPHKLKIQEGESILQSLGSGDHVVALEVEGKSWSTPQLSQQMERWRMSGQDVALLVGGPDGLSDACRARANQQWSLSPLTLPHPLVRVLLAEQLYRAWTILQGHPYHRE</sequence>
<reference key="1">
    <citation type="journal article" date="2005" name="Nucleic Acids Res.">
        <title>Genomic blueprint of Hahella chejuensis, a marine microbe producing an algicidal agent.</title>
        <authorList>
            <person name="Jeong H."/>
            <person name="Yim J.H."/>
            <person name="Lee C."/>
            <person name="Choi S.-H."/>
            <person name="Park Y.K."/>
            <person name="Yoon S.H."/>
            <person name="Hur C.-G."/>
            <person name="Kang H.-Y."/>
            <person name="Kim D."/>
            <person name="Lee H.H."/>
            <person name="Park K.H."/>
            <person name="Park S.-H."/>
            <person name="Park H.-S."/>
            <person name="Lee H.K."/>
            <person name="Oh T.K."/>
            <person name="Kim J.F."/>
        </authorList>
    </citation>
    <scope>NUCLEOTIDE SEQUENCE [LARGE SCALE GENOMIC DNA]</scope>
    <source>
        <strain>KCTC 2396</strain>
    </source>
</reference>
<name>RLMH_HAHCH</name>
<proteinExistence type="inferred from homology"/>
<gene>
    <name evidence="1" type="primary">rlmH</name>
    <name type="ordered locus">HCH_05844</name>
</gene>
<evidence type="ECO:0000255" key="1">
    <source>
        <dbReference type="HAMAP-Rule" id="MF_00658"/>
    </source>
</evidence>
<evidence type="ECO:0000305" key="2"/>
<organism>
    <name type="scientific">Hahella chejuensis (strain KCTC 2396)</name>
    <dbReference type="NCBI Taxonomy" id="349521"/>
    <lineage>
        <taxon>Bacteria</taxon>
        <taxon>Pseudomonadati</taxon>
        <taxon>Pseudomonadota</taxon>
        <taxon>Gammaproteobacteria</taxon>
        <taxon>Oceanospirillales</taxon>
        <taxon>Hahellaceae</taxon>
        <taxon>Hahella</taxon>
    </lineage>
</organism>
<feature type="chain" id="PRO_0000260561" description="Ribosomal RNA large subunit methyltransferase H">
    <location>
        <begin position="1"/>
        <end position="156"/>
    </location>
</feature>
<feature type="binding site" evidence="1">
    <location>
        <position position="73"/>
    </location>
    <ligand>
        <name>S-adenosyl-L-methionine</name>
        <dbReference type="ChEBI" id="CHEBI:59789"/>
    </ligand>
</feature>
<feature type="binding site" evidence="1">
    <location>
        <position position="104"/>
    </location>
    <ligand>
        <name>S-adenosyl-L-methionine</name>
        <dbReference type="ChEBI" id="CHEBI:59789"/>
    </ligand>
</feature>
<feature type="binding site" evidence="1">
    <location>
        <begin position="123"/>
        <end position="128"/>
    </location>
    <ligand>
        <name>S-adenosyl-L-methionine</name>
        <dbReference type="ChEBI" id="CHEBI:59789"/>
    </ligand>
</feature>
<accession>Q2SA30</accession>
<comment type="function">
    <text evidence="1">Specifically methylates the pseudouridine at position 1915 (m3Psi1915) in 23S rRNA.</text>
</comment>
<comment type="catalytic activity">
    <reaction evidence="1">
        <text>pseudouridine(1915) in 23S rRNA + S-adenosyl-L-methionine = N(3)-methylpseudouridine(1915) in 23S rRNA + S-adenosyl-L-homocysteine + H(+)</text>
        <dbReference type="Rhea" id="RHEA:42752"/>
        <dbReference type="Rhea" id="RHEA-COMP:10221"/>
        <dbReference type="Rhea" id="RHEA-COMP:10222"/>
        <dbReference type="ChEBI" id="CHEBI:15378"/>
        <dbReference type="ChEBI" id="CHEBI:57856"/>
        <dbReference type="ChEBI" id="CHEBI:59789"/>
        <dbReference type="ChEBI" id="CHEBI:65314"/>
        <dbReference type="ChEBI" id="CHEBI:74486"/>
        <dbReference type="EC" id="2.1.1.177"/>
    </reaction>
</comment>
<comment type="subunit">
    <text evidence="1">Homodimer.</text>
</comment>
<comment type="subcellular location">
    <subcellularLocation>
        <location evidence="1">Cytoplasm</location>
    </subcellularLocation>
</comment>
<comment type="similarity">
    <text evidence="1">Belongs to the RNA methyltransferase RlmH family.</text>
</comment>
<comment type="sequence caution" evidence="2">
    <conflict type="erroneous initiation">
        <sequence resource="EMBL-CDS" id="ABC32494"/>
    </conflict>
</comment>
<keyword id="KW-0963">Cytoplasm</keyword>
<keyword id="KW-0489">Methyltransferase</keyword>
<keyword id="KW-1185">Reference proteome</keyword>
<keyword id="KW-0698">rRNA processing</keyword>
<keyword id="KW-0949">S-adenosyl-L-methionine</keyword>
<keyword id="KW-0808">Transferase</keyword>
<dbReference type="EC" id="2.1.1.177" evidence="1"/>
<dbReference type="EMBL" id="CP000155">
    <property type="protein sequence ID" value="ABC32494.1"/>
    <property type="status" value="ALT_INIT"/>
    <property type="molecule type" value="Genomic_DNA"/>
</dbReference>
<dbReference type="RefSeq" id="WP_041598945.1">
    <property type="nucleotide sequence ID" value="NC_007645.1"/>
</dbReference>
<dbReference type="SMR" id="Q2SA30"/>
<dbReference type="STRING" id="349521.HCH_05844"/>
<dbReference type="KEGG" id="hch:HCH_05844"/>
<dbReference type="eggNOG" id="COG1576">
    <property type="taxonomic scope" value="Bacteria"/>
</dbReference>
<dbReference type="HOGENOM" id="CLU_100552_1_0_6"/>
<dbReference type="OrthoDB" id="9806643at2"/>
<dbReference type="Proteomes" id="UP000000238">
    <property type="component" value="Chromosome"/>
</dbReference>
<dbReference type="GO" id="GO:0005737">
    <property type="term" value="C:cytoplasm"/>
    <property type="evidence" value="ECO:0007669"/>
    <property type="project" value="UniProtKB-SubCell"/>
</dbReference>
<dbReference type="GO" id="GO:0070038">
    <property type="term" value="F:rRNA (pseudouridine-N3-)-methyltransferase activity"/>
    <property type="evidence" value="ECO:0007669"/>
    <property type="project" value="UniProtKB-UniRule"/>
</dbReference>
<dbReference type="CDD" id="cd18081">
    <property type="entry name" value="RlmH-like"/>
    <property type="match status" value="1"/>
</dbReference>
<dbReference type="Gene3D" id="3.40.1280.10">
    <property type="match status" value="1"/>
</dbReference>
<dbReference type="HAMAP" id="MF_00658">
    <property type="entry name" value="23SrRNA_methyltr_H"/>
    <property type="match status" value="1"/>
</dbReference>
<dbReference type="InterPro" id="IPR029028">
    <property type="entry name" value="Alpha/beta_knot_MTases"/>
</dbReference>
<dbReference type="InterPro" id="IPR003742">
    <property type="entry name" value="RlmH-like"/>
</dbReference>
<dbReference type="InterPro" id="IPR029026">
    <property type="entry name" value="tRNA_m1G_MTases_N"/>
</dbReference>
<dbReference type="NCBIfam" id="NF000986">
    <property type="entry name" value="PRK00103.1-4"/>
    <property type="match status" value="1"/>
</dbReference>
<dbReference type="NCBIfam" id="TIGR00246">
    <property type="entry name" value="tRNA_RlmH_YbeA"/>
    <property type="match status" value="1"/>
</dbReference>
<dbReference type="PANTHER" id="PTHR33603">
    <property type="entry name" value="METHYLTRANSFERASE"/>
    <property type="match status" value="1"/>
</dbReference>
<dbReference type="PANTHER" id="PTHR33603:SF1">
    <property type="entry name" value="RIBOSOMAL RNA LARGE SUBUNIT METHYLTRANSFERASE H"/>
    <property type="match status" value="1"/>
</dbReference>
<dbReference type="Pfam" id="PF02590">
    <property type="entry name" value="SPOUT_MTase"/>
    <property type="match status" value="1"/>
</dbReference>
<dbReference type="PIRSF" id="PIRSF004505">
    <property type="entry name" value="MT_bac"/>
    <property type="match status" value="1"/>
</dbReference>
<dbReference type="SUPFAM" id="SSF75217">
    <property type="entry name" value="alpha/beta knot"/>
    <property type="match status" value="1"/>
</dbReference>
<protein>
    <recommendedName>
        <fullName evidence="1">Ribosomal RNA large subunit methyltransferase H</fullName>
        <ecNumber evidence="1">2.1.1.177</ecNumber>
    </recommendedName>
    <alternativeName>
        <fullName evidence="1">23S rRNA (pseudouridine1915-N3)-methyltransferase</fullName>
    </alternativeName>
    <alternativeName>
        <fullName evidence="1">23S rRNA m3Psi1915 methyltransferase</fullName>
    </alternativeName>
    <alternativeName>
        <fullName evidence="1">rRNA (pseudouridine-N3-)-methyltransferase RlmH</fullName>
    </alternativeName>
</protein>